<comment type="function">
    <text evidence="1">Endonuclease that specifically degrades the RNA of RNA-DNA hybrids.</text>
</comment>
<comment type="catalytic activity">
    <reaction evidence="1">
        <text>Endonucleolytic cleavage to 5'-phosphomonoester.</text>
        <dbReference type="EC" id="3.1.26.4"/>
    </reaction>
</comment>
<comment type="cofactor">
    <cofactor evidence="1">
        <name>Mg(2+)</name>
        <dbReference type="ChEBI" id="CHEBI:18420"/>
    </cofactor>
    <text evidence="1">Binds 1 Mg(2+) ion per subunit. May bind a second metal ion at a regulatory site, or after substrate binding.</text>
</comment>
<comment type="subunit">
    <text evidence="1">Monomer.</text>
</comment>
<comment type="subcellular location">
    <subcellularLocation>
        <location evidence="1">Cytoplasm</location>
    </subcellularLocation>
</comment>
<comment type="similarity">
    <text evidence="1">Belongs to the RNase H family.</text>
</comment>
<sequence>MQEVTIYSDGACKGNPGPGGWGAVLVAGGHEKELFGGESPTTNNRMELMAVIEALRALKRPCIVNIYTDSQYVQKGISEWIHGWKARGWKTADKKPVKNADLWQALDEAQKPHQITWHWVRGHNGHPGNERADALANRGVASINT</sequence>
<keyword id="KW-0963">Cytoplasm</keyword>
<keyword id="KW-0255">Endonuclease</keyword>
<keyword id="KW-0378">Hydrolase</keyword>
<keyword id="KW-0460">Magnesium</keyword>
<keyword id="KW-0479">Metal-binding</keyword>
<keyword id="KW-0540">Nuclease</keyword>
<keyword id="KW-1185">Reference proteome</keyword>
<gene>
    <name evidence="1" type="primary">rnhA</name>
    <name type="ordered locus">Rmet_2208</name>
</gene>
<accession>Q1LL89</accession>
<reference key="1">
    <citation type="journal article" date="2010" name="PLoS ONE">
        <title>The complete genome sequence of Cupriavidus metallidurans strain CH34, a master survivalist in harsh and anthropogenic environments.</title>
        <authorList>
            <person name="Janssen P.J."/>
            <person name="Van Houdt R."/>
            <person name="Moors H."/>
            <person name="Monsieurs P."/>
            <person name="Morin N."/>
            <person name="Michaux A."/>
            <person name="Benotmane M.A."/>
            <person name="Leys N."/>
            <person name="Vallaeys T."/>
            <person name="Lapidus A."/>
            <person name="Monchy S."/>
            <person name="Medigue C."/>
            <person name="Taghavi S."/>
            <person name="McCorkle S."/>
            <person name="Dunn J."/>
            <person name="van der Lelie D."/>
            <person name="Mergeay M."/>
        </authorList>
    </citation>
    <scope>NUCLEOTIDE SEQUENCE [LARGE SCALE GENOMIC DNA]</scope>
    <source>
        <strain>ATCC 43123 / DSM 2839 / NBRC 102507 / CH34</strain>
    </source>
</reference>
<organism>
    <name type="scientific">Cupriavidus metallidurans (strain ATCC 43123 / DSM 2839 / NBRC 102507 / CH34)</name>
    <name type="common">Ralstonia metallidurans</name>
    <dbReference type="NCBI Taxonomy" id="266264"/>
    <lineage>
        <taxon>Bacteria</taxon>
        <taxon>Pseudomonadati</taxon>
        <taxon>Pseudomonadota</taxon>
        <taxon>Betaproteobacteria</taxon>
        <taxon>Burkholderiales</taxon>
        <taxon>Burkholderiaceae</taxon>
        <taxon>Cupriavidus</taxon>
    </lineage>
</organism>
<name>RNH_CUPMC</name>
<evidence type="ECO:0000255" key="1">
    <source>
        <dbReference type="HAMAP-Rule" id="MF_00042"/>
    </source>
</evidence>
<evidence type="ECO:0000255" key="2">
    <source>
        <dbReference type="PROSITE-ProRule" id="PRU00408"/>
    </source>
</evidence>
<feature type="chain" id="PRO_0000332660" description="Ribonuclease H">
    <location>
        <begin position="1"/>
        <end position="145"/>
    </location>
</feature>
<feature type="domain" description="RNase H type-1" evidence="2">
    <location>
        <begin position="1"/>
        <end position="141"/>
    </location>
</feature>
<feature type="binding site" evidence="1">
    <location>
        <position position="9"/>
    </location>
    <ligand>
        <name>Mg(2+)</name>
        <dbReference type="ChEBI" id="CHEBI:18420"/>
        <label>1</label>
    </ligand>
</feature>
<feature type="binding site" evidence="1">
    <location>
        <position position="9"/>
    </location>
    <ligand>
        <name>Mg(2+)</name>
        <dbReference type="ChEBI" id="CHEBI:18420"/>
        <label>2</label>
    </ligand>
</feature>
<feature type="binding site" evidence="1">
    <location>
        <position position="47"/>
    </location>
    <ligand>
        <name>Mg(2+)</name>
        <dbReference type="ChEBI" id="CHEBI:18420"/>
        <label>1</label>
    </ligand>
</feature>
<feature type="binding site" evidence="1">
    <location>
        <position position="69"/>
    </location>
    <ligand>
        <name>Mg(2+)</name>
        <dbReference type="ChEBI" id="CHEBI:18420"/>
        <label>1</label>
    </ligand>
</feature>
<feature type="binding site" evidence="1">
    <location>
        <position position="133"/>
    </location>
    <ligand>
        <name>Mg(2+)</name>
        <dbReference type="ChEBI" id="CHEBI:18420"/>
        <label>2</label>
    </ligand>
</feature>
<dbReference type="EC" id="3.1.26.4" evidence="1"/>
<dbReference type="EMBL" id="CP000352">
    <property type="protein sequence ID" value="ABF09087.1"/>
    <property type="molecule type" value="Genomic_DNA"/>
</dbReference>
<dbReference type="RefSeq" id="WP_011516915.1">
    <property type="nucleotide sequence ID" value="NC_007973.1"/>
</dbReference>
<dbReference type="SMR" id="Q1LL89"/>
<dbReference type="STRING" id="266264.Rmet_2208"/>
<dbReference type="KEGG" id="rme:Rmet_2208"/>
<dbReference type="eggNOG" id="COG0328">
    <property type="taxonomic scope" value="Bacteria"/>
</dbReference>
<dbReference type="HOGENOM" id="CLU_030894_6_0_4"/>
<dbReference type="Proteomes" id="UP000002429">
    <property type="component" value="Chromosome"/>
</dbReference>
<dbReference type="GO" id="GO:0005737">
    <property type="term" value="C:cytoplasm"/>
    <property type="evidence" value="ECO:0007669"/>
    <property type="project" value="UniProtKB-SubCell"/>
</dbReference>
<dbReference type="GO" id="GO:0000287">
    <property type="term" value="F:magnesium ion binding"/>
    <property type="evidence" value="ECO:0007669"/>
    <property type="project" value="UniProtKB-UniRule"/>
</dbReference>
<dbReference type="GO" id="GO:0003676">
    <property type="term" value="F:nucleic acid binding"/>
    <property type="evidence" value="ECO:0007669"/>
    <property type="project" value="InterPro"/>
</dbReference>
<dbReference type="GO" id="GO:0004523">
    <property type="term" value="F:RNA-DNA hybrid ribonuclease activity"/>
    <property type="evidence" value="ECO:0007669"/>
    <property type="project" value="UniProtKB-UniRule"/>
</dbReference>
<dbReference type="GO" id="GO:0043137">
    <property type="term" value="P:DNA replication, removal of RNA primer"/>
    <property type="evidence" value="ECO:0007669"/>
    <property type="project" value="TreeGrafter"/>
</dbReference>
<dbReference type="CDD" id="cd09278">
    <property type="entry name" value="RNase_HI_prokaryote_like"/>
    <property type="match status" value="1"/>
</dbReference>
<dbReference type="FunFam" id="3.30.420.10:FF:000089">
    <property type="entry name" value="Ribonuclease H"/>
    <property type="match status" value="1"/>
</dbReference>
<dbReference type="Gene3D" id="3.30.420.10">
    <property type="entry name" value="Ribonuclease H-like superfamily/Ribonuclease H"/>
    <property type="match status" value="1"/>
</dbReference>
<dbReference type="HAMAP" id="MF_00042">
    <property type="entry name" value="RNase_H"/>
    <property type="match status" value="1"/>
</dbReference>
<dbReference type="InterPro" id="IPR050092">
    <property type="entry name" value="RNase_H"/>
</dbReference>
<dbReference type="InterPro" id="IPR012337">
    <property type="entry name" value="RNaseH-like_sf"/>
</dbReference>
<dbReference type="InterPro" id="IPR002156">
    <property type="entry name" value="RNaseH_domain"/>
</dbReference>
<dbReference type="InterPro" id="IPR036397">
    <property type="entry name" value="RNaseH_sf"/>
</dbReference>
<dbReference type="InterPro" id="IPR022892">
    <property type="entry name" value="RNaseHI"/>
</dbReference>
<dbReference type="NCBIfam" id="NF001236">
    <property type="entry name" value="PRK00203.1"/>
    <property type="match status" value="1"/>
</dbReference>
<dbReference type="PANTHER" id="PTHR10642">
    <property type="entry name" value="RIBONUCLEASE H1"/>
    <property type="match status" value="1"/>
</dbReference>
<dbReference type="PANTHER" id="PTHR10642:SF26">
    <property type="entry name" value="RIBONUCLEASE H1"/>
    <property type="match status" value="1"/>
</dbReference>
<dbReference type="Pfam" id="PF00075">
    <property type="entry name" value="RNase_H"/>
    <property type="match status" value="1"/>
</dbReference>
<dbReference type="SUPFAM" id="SSF53098">
    <property type="entry name" value="Ribonuclease H-like"/>
    <property type="match status" value="1"/>
</dbReference>
<dbReference type="PROSITE" id="PS50879">
    <property type="entry name" value="RNASE_H_1"/>
    <property type="match status" value="1"/>
</dbReference>
<proteinExistence type="inferred from homology"/>
<protein>
    <recommendedName>
        <fullName evidence="1">Ribonuclease H</fullName>
        <shortName evidence="1">RNase H</shortName>
        <ecNumber evidence="1">3.1.26.4</ecNumber>
    </recommendedName>
</protein>